<protein>
    <recommendedName>
        <fullName evidence="1">o-succinylbenzoate synthase</fullName>
        <shortName evidence="1">OSB synthase</shortName>
        <shortName evidence="1">OSBS</shortName>
        <ecNumber evidence="1">4.2.1.113</ecNumber>
    </recommendedName>
    <alternativeName>
        <fullName evidence="1">4-(2'-carboxyphenyl)-4-oxybutyric acid synthase</fullName>
    </alternativeName>
    <alternativeName>
        <fullName evidence="1">o-succinylbenzoic acid synthase</fullName>
    </alternativeName>
</protein>
<reference key="1">
    <citation type="journal article" date="2008" name="Genome Res.">
        <title>Insights from the complete genome sequence of Mycobacterium marinum on the evolution of Mycobacterium tuberculosis.</title>
        <authorList>
            <person name="Stinear T.P."/>
            <person name="Seemann T."/>
            <person name="Harrison P.F."/>
            <person name="Jenkin G.A."/>
            <person name="Davies J.K."/>
            <person name="Johnson P.D."/>
            <person name="Abdellah Z."/>
            <person name="Arrowsmith C."/>
            <person name="Chillingworth T."/>
            <person name="Churcher C."/>
            <person name="Clarke K."/>
            <person name="Cronin A."/>
            <person name="Davis P."/>
            <person name="Goodhead I."/>
            <person name="Holroyd N."/>
            <person name="Jagels K."/>
            <person name="Lord A."/>
            <person name="Moule S."/>
            <person name="Mungall K."/>
            <person name="Norbertczak H."/>
            <person name="Quail M.A."/>
            <person name="Rabbinowitsch E."/>
            <person name="Walker D."/>
            <person name="White B."/>
            <person name="Whitehead S."/>
            <person name="Small P.L."/>
            <person name="Brosch R."/>
            <person name="Ramakrishnan L."/>
            <person name="Fischbach M.A."/>
            <person name="Parkhill J."/>
            <person name="Cole S.T."/>
        </authorList>
    </citation>
    <scope>NUCLEOTIDE SEQUENCE [LARGE SCALE GENOMIC DNA]</scope>
    <source>
        <strain>ATCC BAA-535 / M</strain>
    </source>
</reference>
<organism>
    <name type="scientific">Mycobacterium marinum (strain ATCC BAA-535 / M)</name>
    <dbReference type="NCBI Taxonomy" id="216594"/>
    <lineage>
        <taxon>Bacteria</taxon>
        <taxon>Bacillati</taxon>
        <taxon>Actinomycetota</taxon>
        <taxon>Actinomycetes</taxon>
        <taxon>Mycobacteriales</taxon>
        <taxon>Mycobacteriaceae</taxon>
        <taxon>Mycobacterium</taxon>
        <taxon>Mycobacterium ulcerans group</taxon>
    </lineage>
</organism>
<accession>B2HRP4</accession>
<evidence type="ECO:0000255" key="1">
    <source>
        <dbReference type="HAMAP-Rule" id="MF_00470"/>
    </source>
</evidence>
<keyword id="KW-0456">Lyase</keyword>
<keyword id="KW-0460">Magnesium</keyword>
<keyword id="KW-0474">Menaquinone biosynthesis</keyword>
<keyword id="KW-0479">Metal-binding</keyword>
<keyword id="KW-1185">Reference proteome</keyword>
<gene>
    <name evidence="1" type="primary">menC</name>
    <name type="ordered locus">MMAR_0899</name>
</gene>
<feature type="chain" id="PRO_1000125576" description="o-succinylbenzoate synthase">
    <location>
        <begin position="1"/>
        <end position="327"/>
    </location>
</feature>
<feature type="active site" description="Proton donor" evidence="1">
    <location>
        <position position="110"/>
    </location>
</feature>
<feature type="active site" description="Proton acceptor" evidence="1">
    <location>
        <position position="212"/>
    </location>
</feature>
<feature type="binding site" evidence="1">
    <location>
        <position position="138"/>
    </location>
    <ligand>
        <name>Mg(2+)</name>
        <dbReference type="ChEBI" id="CHEBI:18420"/>
    </ligand>
</feature>
<feature type="binding site" evidence="1">
    <location>
        <position position="165"/>
    </location>
    <ligand>
        <name>Mg(2+)</name>
        <dbReference type="ChEBI" id="CHEBI:18420"/>
    </ligand>
</feature>
<feature type="binding site" evidence="1">
    <location>
        <position position="188"/>
    </location>
    <ligand>
        <name>Mg(2+)</name>
        <dbReference type="ChEBI" id="CHEBI:18420"/>
    </ligand>
</feature>
<dbReference type="EC" id="4.2.1.113" evidence="1"/>
<dbReference type="EMBL" id="CP000854">
    <property type="protein sequence ID" value="ACC39356.1"/>
    <property type="molecule type" value="Genomic_DNA"/>
</dbReference>
<dbReference type="RefSeq" id="WP_012392823.1">
    <property type="nucleotide sequence ID" value="NC_010612.1"/>
</dbReference>
<dbReference type="SMR" id="B2HRP4"/>
<dbReference type="STRING" id="216594.MMAR_0899"/>
<dbReference type="KEGG" id="mmi:MMAR_0899"/>
<dbReference type="eggNOG" id="COG4948">
    <property type="taxonomic scope" value="Bacteria"/>
</dbReference>
<dbReference type="HOGENOM" id="CLU_057696_0_0_11"/>
<dbReference type="OrthoDB" id="3725747at2"/>
<dbReference type="UniPathway" id="UPA00079"/>
<dbReference type="UniPathway" id="UPA01057">
    <property type="reaction ID" value="UER00165"/>
</dbReference>
<dbReference type="Proteomes" id="UP000001190">
    <property type="component" value="Chromosome"/>
</dbReference>
<dbReference type="GO" id="GO:0000287">
    <property type="term" value="F:magnesium ion binding"/>
    <property type="evidence" value="ECO:0007669"/>
    <property type="project" value="UniProtKB-UniRule"/>
</dbReference>
<dbReference type="GO" id="GO:0043748">
    <property type="term" value="F:O-succinylbenzoate synthase activity"/>
    <property type="evidence" value="ECO:0007669"/>
    <property type="project" value="UniProtKB-EC"/>
</dbReference>
<dbReference type="GO" id="GO:0009234">
    <property type="term" value="P:menaquinone biosynthetic process"/>
    <property type="evidence" value="ECO:0007669"/>
    <property type="project" value="UniProtKB-UniRule"/>
</dbReference>
<dbReference type="CDD" id="cd03320">
    <property type="entry name" value="OSBS"/>
    <property type="match status" value="1"/>
</dbReference>
<dbReference type="Gene3D" id="3.20.20.120">
    <property type="entry name" value="Enolase-like C-terminal domain"/>
    <property type="match status" value="1"/>
</dbReference>
<dbReference type="HAMAP" id="MF_00470">
    <property type="entry name" value="MenC_1"/>
    <property type="match status" value="1"/>
</dbReference>
<dbReference type="InterPro" id="IPR036849">
    <property type="entry name" value="Enolase-like_C_sf"/>
</dbReference>
<dbReference type="InterPro" id="IPR029065">
    <property type="entry name" value="Enolase_C-like"/>
</dbReference>
<dbReference type="InterPro" id="IPR013342">
    <property type="entry name" value="Mandelate_racemase_C"/>
</dbReference>
<dbReference type="InterPro" id="IPR010196">
    <property type="entry name" value="OSB_synthase_MenC1"/>
</dbReference>
<dbReference type="NCBIfam" id="NF002782">
    <property type="entry name" value="PRK02901.1"/>
    <property type="match status" value="1"/>
</dbReference>
<dbReference type="PANTHER" id="PTHR48073:SF2">
    <property type="entry name" value="O-SUCCINYLBENZOATE SYNTHASE"/>
    <property type="match status" value="1"/>
</dbReference>
<dbReference type="PANTHER" id="PTHR48073">
    <property type="entry name" value="O-SUCCINYLBENZOATE SYNTHASE-RELATED"/>
    <property type="match status" value="1"/>
</dbReference>
<dbReference type="Pfam" id="PF18374">
    <property type="entry name" value="Enolase_like_N"/>
    <property type="match status" value="1"/>
</dbReference>
<dbReference type="Pfam" id="PF13378">
    <property type="entry name" value="MR_MLE_C"/>
    <property type="match status" value="1"/>
</dbReference>
<dbReference type="SFLD" id="SFLDS00001">
    <property type="entry name" value="Enolase"/>
    <property type="match status" value="1"/>
</dbReference>
<dbReference type="SFLD" id="SFLDF00009">
    <property type="entry name" value="o-succinylbenzoate_synthase"/>
    <property type="match status" value="1"/>
</dbReference>
<dbReference type="SMART" id="SM00922">
    <property type="entry name" value="MR_MLE"/>
    <property type="match status" value="1"/>
</dbReference>
<dbReference type="SUPFAM" id="SSF51604">
    <property type="entry name" value="Enolase C-terminal domain-like"/>
    <property type="match status" value="1"/>
</dbReference>
<name>MENC_MYCMM</name>
<comment type="function">
    <text evidence="1">Converts 2-succinyl-6-hydroxy-2,4-cyclohexadiene-1-carboxylate (SHCHC) to 2-succinylbenzoate (OSB).</text>
</comment>
<comment type="catalytic activity">
    <reaction evidence="1">
        <text>(1R,6R)-6-hydroxy-2-succinyl-cyclohexa-2,4-diene-1-carboxylate = 2-succinylbenzoate + H2O</text>
        <dbReference type="Rhea" id="RHEA:10196"/>
        <dbReference type="ChEBI" id="CHEBI:15377"/>
        <dbReference type="ChEBI" id="CHEBI:18325"/>
        <dbReference type="ChEBI" id="CHEBI:58689"/>
        <dbReference type="EC" id="4.2.1.113"/>
    </reaction>
</comment>
<comment type="cofactor">
    <cofactor evidence="1">
        <name>a divalent metal cation</name>
        <dbReference type="ChEBI" id="CHEBI:60240"/>
    </cofactor>
</comment>
<comment type="pathway">
    <text evidence="1">Quinol/quinone metabolism; 1,4-dihydroxy-2-naphthoate biosynthesis; 1,4-dihydroxy-2-naphthoate from chorismate: step 4/7.</text>
</comment>
<comment type="pathway">
    <text evidence="1">Quinol/quinone metabolism; menaquinone biosynthesis.</text>
</comment>
<comment type="similarity">
    <text evidence="1">Belongs to the mandelate racemase/muconate lactonizing enzyme family. MenC type 1 subfamily.</text>
</comment>
<sequence>MIPGPATLPDLLDRLHVVALPMRVRFRGITTREVALIEGPSGWGEFGAFLEYQPPEAAAWLASAIDAAYGQPPPVRRGRIPINATVPAVPPAQVPELLARFPGARTAKVKVAEPGQTLASDVERVNAVRALVPTVRVDANGGWSVDQAAQAAVALTADGPLEYLEQPCATVGELAELRRRIEVPIAADEAIRKAEDPLAVVRAGAADVAVLKVAPLGGVWALLDIAAQIDIPVVISSALDSAVGIAAGLSAAAALPQLQHACGLGTGGLFVEDVAEPAIPVDGALAPQRVVPDPARLRALGAAPDRRQWWIDRIKACYPLLYRRSGD</sequence>
<proteinExistence type="inferred from homology"/>